<keyword id="KW-0521">NADP</keyword>
<keyword id="KW-0560">Oxidoreductase</keyword>
<gene>
    <name evidence="1" type="primary">guaC</name>
    <name type="ordered locus">PEPE_0595</name>
</gene>
<organism>
    <name type="scientific">Pediococcus pentosaceus (strain ATCC 25745 / CCUG 21536 / LMG 10740 / 183-1w)</name>
    <dbReference type="NCBI Taxonomy" id="278197"/>
    <lineage>
        <taxon>Bacteria</taxon>
        <taxon>Bacillati</taxon>
        <taxon>Bacillota</taxon>
        <taxon>Bacilli</taxon>
        <taxon>Lactobacillales</taxon>
        <taxon>Lactobacillaceae</taxon>
        <taxon>Pediococcus</taxon>
    </lineage>
</organism>
<reference key="1">
    <citation type="journal article" date="2006" name="Proc. Natl. Acad. Sci. U.S.A.">
        <title>Comparative genomics of the lactic acid bacteria.</title>
        <authorList>
            <person name="Makarova K.S."/>
            <person name="Slesarev A."/>
            <person name="Wolf Y.I."/>
            <person name="Sorokin A."/>
            <person name="Mirkin B."/>
            <person name="Koonin E.V."/>
            <person name="Pavlov A."/>
            <person name="Pavlova N."/>
            <person name="Karamychev V."/>
            <person name="Polouchine N."/>
            <person name="Shakhova V."/>
            <person name="Grigoriev I."/>
            <person name="Lou Y."/>
            <person name="Rohksar D."/>
            <person name="Lucas S."/>
            <person name="Huang K."/>
            <person name="Goodstein D.M."/>
            <person name="Hawkins T."/>
            <person name="Plengvidhya V."/>
            <person name="Welker D."/>
            <person name="Hughes J."/>
            <person name="Goh Y."/>
            <person name="Benson A."/>
            <person name="Baldwin K."/>
            <person name="Lee J.-H."/>
            <person name="Diaz-Muniz I."/>
            <person name="Dosti B."/>
            <person name="Smeianov V."/>
            <person name="Wechter W."/>
            <person name="Barabote R."/>
            <person name="Lorca G."/>
            <person name="Altermann E."/>
            <person name="Barrangou R."/>
            <person name="Ganesan B."/>
            <person name="Xie Y."/>
            <person name="Rawsthorne H."/>
            <person name="Tamir D."/>
            <person name="Parker C."/>
            <person name="Breidt F."/>
            <person name="Broadbent J.R."/>
            <person name="Hutkins R."/>
            <person name="O'Sullivan D."/>
            <person name="Steele J."/>
            <person name="Unlu G."/>
            <person name="Saier M.H. Jr."/>
            <person name="Klaenhammer T."/>
            <person name="Richardson P."/>
            <person name="Kozyavkin S."/>
            <person name="Weimer B.C."/>
            <person name="Mills D.A."/>
        </authorList>
    </citation>
    <scope>NUCLEOTIDE SEQUENCE [LARGE SCALE GENOMIC DNA]</scope>
    <source>
        <strain>ATCC 25745 / CCUG 21536 / LMG 10740 / 183-1w</strain>
    </source>
</reference>
<proteinExistence type="inferred from homology"/>
<accession>Q03GJ0</accession>
<dbReference type="EC" id="1.7.1.7" evidence="1"/>
<dbReference type="EMBL" id="CP000422">
    <property type="protein sequence ID" value="ABJ67682.1"/>
    <property type="molecule type" value="Genomic_DNA"/>
</dbReference>
<dbReference type="RefSeq" id="WP_011673177.1">
    <property type="nucleotide sequence ID" value="NC_008525.1"/>
</dbReference>
<dbReference type="SMR" id="Q03GJ0"/>
<dbReference type="STRING" id="278197.PEPE_0595"/>
<dbReference type="GeneID" id="33062697"/>
<dbReference type="KEGG" id="ppe:PEPE_0595"/>
<dbReference type="eggNOG" id="COG0516">
    <property type="taxonomic scope" value="Bacteria"/>
</dbReference>
<dbReference type="HOGENOM" id="CLU_022552_5_0_9"/>
<dbReference type="OrthoDB" id="9805398at2"/>
<dbReference type="Proteomes" id="UP000000773">
    <property type="component" value="Chromosome"/>
</dbReference>
<dbReference type="GO" id="GO:0005829">
    <property type="term" value="C:cytosol"/>
    <property type="evidence" value="ECO:0007669"/>
    <property type="project" value="TreeGrafter"/>
</dbReference>
<dbReference type="GO" id="GO:1902560">
    <property type="term" value="C:GMP reductase complex"/>
    <property type="evidence" value="ECO:0007669"/>
    <property type="project" value="InterPro"/>
</dbReference>
<dbReference type="GO" id="GO:0003920">
    <property type="term" value="F:GMP reductase activity"/>
    <property type="evidence" value="ECO:0007669"/>
    <property type="project" value="UniProtKB-UniRule"/>
</dbReference>
<dbReference type="GO" id="GO:0006163">
    <property type="term" value="P:purine nucleotide metabolic process"/>
    <property type="evidence" value="ECO:0007669"/>
    <property type="project" value="UniProtKB-UniRule"/>
</dbReference>
<dbReference type="CDD" id="cd00381">
    <property type="entry name" value="IMPDH"/>
    <property type="match status" value="1"/>
</dbReference>
<dbReference type="FunFam" id="3.20.20.70:FF:000424">
    <property type="entry name" value="Inosine-5'-monophosphate dehydrogenase 2"/>
    <property type="match status" value="1"/>
</dbReference>
<dbReference type="Gene3D" id="3.20.20.70">
    <property type="entry name" value="Aldolase class I"/>
    <property type="match status" value="1"/>
</dbReference>
<dbReference type="HAMAP" id="MF_01511">
    <property type="entry name" value="GMP_reduct_type2"/>
    <property type="match status" value="1"/>
</dbReference>
<dbReference type="InterPro" id="IPR013785">
    <property type="entry name" value="Aldolase_TIM"/>
</dbReference>
<dbReference type="InterPro" id="IPR050139">
    <property type="entry name" value="GMP_reductase"/>
</dbReference>
<dbReference type="InterPro" id="IPR005994">
    <property type="entry name" value="GuaC_type_2"/>
</dbReference>
<dbReference type="InterPro" id="IPR015875">
    <property type="entry name" value="IMP_DH/GMP_Rdtase_CS"/>
</dbReference>
<dbReference type="InterPro" id="IPR001093">
    <property type="entry name" value="IMP_DH_GMPRt"/>
</dbReference>
<dbReference type="NCBIfam" id="TIGR01306">
    <property type="entry name" value="GMP_reduct_2"/>
    <property type="match status" value="1"/>
</dbReference>
<dbReference type="NCBIfam" id="NF003966">
    <property type="entry name" value="PRK05458.1"/>
    <property type="match status" value="1"/>
</dbReference>
<dbReference type="PANTHER" id="PTHR43170">
    <property type="entry name" value="GMP REDUCTASE"/>
    <property type="match status" value="1"/>
</dbReference>
<dbReference type="PANTHER" id="PTHR43170:SF5">
    <property type="entry name" value="GMP REDUCTASE"/>
    <property type="match status" value="1"/>
</dbReference>
<dbReference type="Pfam" id="PF00478">
    <property type="entry name" value="IMPDH"/>
    <property type="match status" value="1"/>
</dbReference>
<dbReference type="PIRSF" id="PIRSF036500">
    <property type="entry name" value="GMP_red_Firmic"/>
    <property type="match status" value="1"/>
</dbReference>
<dbReference type="SMART" id="SM01240">
    <property type="entry name" value="IMPDH"/>
    <property type="match status" value="1"/>
</dbReference>
<dbReference type="SUPFAM" id="SSF51412">
    <property type="entry name" value="Inosine monophosphate dehydrogenase (IMPDH)"/>
    <property type="match status" value="1"/>
</dbReference>
<dbReference type="PROSITE" id="PS00487">
    <property type="entry name" value="IMP_DH_GMP_RED"/>
    <property type="match status" value="1"/>
</dbReference>
<evidence type="ECO:0000255" key="1">
    <source>
        <dbReference type="HAMAP-Rule" id="MF_01511"/>
    </source>
</evidence>
<comment type="function">
    <text evidence="1">Catalyzes the irreversible NADPH-dependent deamination of GMP to IMP. It functions in the conversion of nucleobase, nucleoside and nucleotide derivatives of G to A nucleotides, and in maintaining the intracellular balance of A and G nucleotides.</text>
</comment>
<comment type="catalytic activity">
    <reaction evidence="1">
        <text>IMP + NH4(+) + NADP(+) = GMP + NADPH + 2 H(+)</text>
        <dbReference type="Rhea" id="RHEA:17185"/>
        <dbReference type="ChEBI" id="CHEBI:15378"/>
        <dbReference type="ChEBI" id="CHEBI:28938"/>
        <dbReference type="ChEBI" id="CHEBI:57783"/>
        <dbReference type="ChEBI" id="CHEBI:58053"/>
        <dbReference type="ChEBI" id="CHEBI:58115"/>
        <dbReference type="ChEBI" id="CHEBI:58349"/>
        <dbReference type="EC" id="1.7.1.7"/>
    </reaction>
</comment>
<comment type="similarity">
    <text evidence="1">Belongs to the IMPDH/GMPR family. GuaC type 2 subfamily.</text>
</comment>
<name>GUAC_PEDPA</name>
<feature type="chain" id="PRO_0000294280" description="GMP reductase">
    <location>
        <begin position="1"/>
        <end position="325"/>
    </location>
</feature>
<feature type="active site" description="Thioimidate intermediate" evidence="1">
    <location>
        <position position="174"/>
    </location>
</feature>
<feature type="binding site" evidence="1">
    <location>
        <begin position="203"/>
        <end position="226"/>
    </location>
    <ligand>
        <name>NADP(+)</name>
        <dbReference type="ChEBI" id="CHEBI:58349"/>
    </ligand>
</feature>
<sequence length="325" mass="36061">MKVFDYEDIQLIPAKCIVRSRTECDPTVVLGEHRFKLPVVPANMQTIINEEIAEKLAEDGYFYIMHRFEPERRMDFVKKMKDKGLISSISVGVKDDEYALIDQLAEENLTPDYITIDVAHGHAQSVIDMIHYIKEKLPAAFVIAGNVGTQEGVRELENAGADATKVGIGPGKVCITKIKTGFGTGGWQLSALRWCAKVARKPLIADGGIRTHGDIAKSIRFGATMVMIGSLFAGHIESPGETKVEDGVKYKEYFGSASQYQKGEAKNVEGKKIWIHQRGHLRDTLQAMREDLQSSISYAGGRDLEAIRKVDYVIVKNSIFNGDVL</sequence>
<protein>
    <recommendedName>
        <fullName evidence="1">GMP reductase</fullName>
        <ecNumber evidence="1">1.7.1.7</ecNumber>
    </recommendedName>
    <alternativeName>
        <fullName evidence="1">Guanosine 5'-monophosphate oxidoreductase</fullName>
        <shortName evidence="1">Guanosine monophosphate reductase</shortName>
    </alternativeName>
</protein>